<protein>
    <recommendedName>
        <fullName evidence="1">3-dehydroquinate synthase</fullName>
        <shortName evidence="1">DHQS</shortName>
        <ecNumber evidence="1">4.2.3.4</ecNumber>
    </recommendedName>
</protein>
<comment type="function">
    <text evidence="1">Catalyzes the conversion of 3-deoxy-D-arabino-heptulosonate 7-phosphate (DAHP) to dehydroquinate (DHQ).</text>
</comment>
<comment type="catalytic activity">
    <reaction evidence="1">
        <text>7-phospho-2-dehydro-3-deoxy-D-arabino-heptonate = 3-dehydroquinate + phosphate</text>
        <dbReference type="Rhea" id="RHEA:21968"/>
        <dbReference type="ChEBI" id="CHEBI:32364"/>
        <dbReference type="ChEBI" id="CHEBI:43474"/>
        <dbReference type="ChEBI" id="CHEBI:58394"/>
        <dbReference type="EC" id="4.2.3.4"/>
    </reaction>
</comment>
<comment type="cofactor">
    <cofactor evidence="1">
        <name>Co(2+)</name>
        <dbReference type="ChEBI" id="CHEBI:48828"/>
    </cofactor>
    <cofactor evidence="1">
        <name>Zn(2+)</name>
        <dbReference type="ChEBI" id="CHEBI:29105"/>
    </cofactor>
    <text evidence="1">Binds 1 divalent metal cation per subunit. Can use either Co(2+) or Zn(2+).</text>
</comment>
<comment type="cofactor">
    <cofactor evidence="1">
        <name>NAD(+)</name>
        <dbReference type="ChEBI" id="CHEBI:57540"/>
    </cofactor>
</comment>
<comment type="pathway">
    <text evidence="1">Metabolic intermediate biosynthesis; chorismate biosynthesis; chorismate from D-erythrose 4-phosphate and phosphoenolpyruvate: step 2/7.</text>
</comment>
<comment type="subcellular location">
    <subcellularLocation>
        <location evidence="1">Cytoplasm</location>
    </subcellularLocation>
</comment>
<comment type="similarity">
    <text evidence="1">Belongs to the sugar phosphate cyclases superfamily. Dehydroquinate synthase family.</text>
</comment>
<reference key="1">
    <citation type="journal article" date="2009" name="J. Bacteriol.">
        <title>Genome sequences of three Agrobacterium biovars help elucidate the evolution of multichromosome genomes in bacteria.</title>
        <authorList>
            <person name="Slater S.C."/>
            <person name="Goldman B.S."/>
            <person name="Goodner B."/>
            <person name="Setubal J.C."/>
            <person name="Farrand S.K."/>
            <person name="Nester E.W."/>
            <person name="Burr T.J."/>
            <person name="Banta L."/>
            <person name="Dickerman A.W."/>
            <person name="Paulsen I."/>
            <person name="Otten L."/>
            <person name="Suen G."/>
            <person name="Welch R."/>
            <person name="Almeida N.F."/>
            <person name="Arnold F."/>
            <person name="Burton O.T."/>
            <person name="Du Z."/>
            <person name="Ewing A."/>
            <person name="Godsy E."/>
            <person name="Heisel S."/>
            <person name="Houmiel K.L."/>
            <person name="Jhaveri J."/>
            <person name="Lu J."/>
            <person name="Miller N.M."/>
            <person name="Norton S."/>
            <person name="Chen Q."/>
            <person name="Phoolcharoen W."/>
            <person name="Ohlin V."/>
            <person name="Ondrusek D."/>
            <person name="Pride N."/>
            <person name="Stricklin S.L."/>
            <person name="Sun J."/>
            <person name="Wheeler C."/>
            <person name="Wilson L."/>
            <person name="Zhu H."/>
            <person name="Wood D.W."/>
        </authorList>
    </citation>
    <scope>NUCLEOTIDE SEQUENCE [LARGE SCALE GENOMIC DNA]</scope>
    <source>
        <strain>K84 / ATCC BAA-868</strain>
    </source>
</reference>
<accession>B9JBT6</accession>
<evidence type="ECO:0000255" key="1">
    <source>
        <dbReference type="HAMAP-Rule" id="MF_00110"/>
    </source>
</evidence>
<keyword id="KW-0028">Amino-acid biosynthesis</keyword>
<keyword id="KW-0057">Aromatic amino acid biosynthesis</keyword>
<keyword id="KW-0170">Cobalt</keyword>
<keyword id="KW-0963">Cytoplasm</keyword>
<keyword id="KW-0456">Lyase</keyword>
<keyword id="KW-0479">Metal-binding</keyword>
<keyword id="KW-0520">NAD</keyword>
<keyword id="KW-0547">Nucleotide-binding</keyword>
<keyword id="KW-0862">Zinc</keyword>
<gene>
    <name evidence="1" type="primary">aroB</name>
    <name type="ordered locus">Arad_4234</name>
</gene>
<name>AROB_RHIR8</name>
<organism>
    <name type="scientific">Rhizobium rhizogenes (strain K84 / ATCC BAA-868)</name>
    <name type="common">Agrobacterium radiobacter</name>
    <dbReference type="NCBI Taxonomy" id="311403"/>
    <lineage>
        <taxon>Bacteria</taxon>
        <taxon>Pseudomonadati</taxon>
        <taxon>Pseudomonadota</taxon>
        <taxon>Alphaproteobacteria</taxon>
        <taxon>Hyphomicrobiales</taxon>
        <taxon>Rhizobiaceae</taxon>
        <taxon>Rhizobium/Agrobacterium group</taxon>
        <taxon>Rhizobium</taxon>
    </lineage>
</organism>
<feature type="chain" id="PRO_1000119069" description="3-dehydroquinate synthase">
    <location>
        <begin position="1"/>
        <end position="377"/>
    </location>
</feature>
<feature type="binding site" evidence="1">
    <location>
        <begin position="115"/>
        <end position="119"/>
    </location>
    <ligand>
        <name>NAD(+)</name>
        <dbReference type="ChEBI" id="CHEBI:57540"/>
    </ligand>
</feature>
<feature type="binding site" evidence="1">
    <location>
        <begin position="139"/>
        <end position="140"/>
    </location>
    <ligand>
        <name>NAD(+)</name>
        <dbReference type="ChEBI" id="CHEBI:57540"/>
    </ligand>
</feature>
<feature type="binding site" evidence="1">
    <location>
        <position position="152"/>
    </location>
    <ligand>
        <name>NAD(+)</name>
        <dbReference type="ChEBI" id="CHEBI:57540"/>
    </ligand>
</feature>
<feature type="binding site" evidence="1">
    <location>
        <position position="161"/>
    </location>
    <ligand>
        <name>NAD(+)</name>
        <dbReference type="ChEBI" id="CHEBI:57540"/>
    </ligand>
</feature>
<feature type="binding site" evidence="1">
    <location>
        <position position="194"/>
    </location>
    <ligand>
        <name>Zn(2+)</name>
        <dbReference type="ChEBI" id="CHEBI:29105"/>
    </ligand>
</feature>
<feature type="binding site" evidence="1">
    <location>
        <position position="256"/>
    </location>
    <ligand>
        <name>Zn(2+)</name>
        <dbReference type="ChEBI" id="CHEBI:29105"/>
    </ligand>
</feature>
<feature type="binding site" evidence="1">
    <location>
        <position position="275"/>
    </location>
    <ligand>
        <name>Zn(2+)</name>
        <dbReference type="ChEBI" id="CHEBI:29105"/>
    </ligand>
</feature>
<proteinExistence type="inferred from homology"/>
<dbReference type="EC" id="4.2.3.4" evidence="1"/>
<dbReference type="EMBL" id="CP000628">
    <property type="protein sequence ID" value="ACM27982.1"/>
    <property type="molecule type" value="Genomic_DNA"/>
</dbReference>
<dbReference type="RefSeq" id="WP_012652594.1">
    <property type="nucleotide sequence ID" value="NC_011985.1"/>
</dbReference>
<dbReference type="SMR" id="B9JBT6"/>
<dbReference type="STRING" id="311403.Arad_4234"/>
<dbReference type="KEGG" id="ara:Arad_4234"/>
<dbReference type="eggNOG" id="COG0337">
    <property type="taxonomic scope" value="Bacteria"/>
</dbReference>
<dbReference type="HOGENOM" id="CLU_001201_0_2_5"/>
<dbReference type="UniPathway" id="UPA00053">
    <property type="reaction ID" value="UER00085"/>
</dbReference>
<dbReference type="Proteomes" id="UP000001600">
    <property type="component" value="Chromosome 1"/>
</dbReference>
<dbReference type="GO" id="GO:0005737">
    <property type="term" value="C:cytoplasm"/>
    <property type="evidence" value="ECO:0007669"/>
    <property type="project" value="UniProtKB-SubCell"/>
</dbReference>
<dbReference type="GO" id="GO:0003856">
    <property type="term" value="F:3-dehydroquinate synthase activity"/>
    <property type="evidence" value="ECO:0007669"/>
    <property type="project" value="UniProtKB-UniRule"/>
</dbReference>
<dbReference type="GO" id="GO:0046872">
    <property type="term" value="F:metal ion binding"/>
    <property type="evidence" value="ECO:0007669"/>
    <property type="project" value="UniProtKB-KW"/>
</dbReference>
<dbReference type="GO" id="GO:0000166">
    <property type="term" value="F:nucleotide binding"/>
    <property type="evidence" value="ECO:0007669"/>
    <property type="project" value="UniProtKB-KW"/>
</dbReference>
<dbReference type="GO" id="GO:0008652">
    <property type="term" value="P:amino acid biosynthetic process"/>
    <property type="evidence" value="ECO:0007669"/>
    <property type="project" value="UniProtKB-KW"/>
</dbReference>
<dbReference type="GO" id="GO:0009073">
    <property type="term" value="P:aromatic amino acid family biosynthetic process"/>
    <property type="evidence" value="ECO:0007669"/>
    <property type="project" value="UniProtKB-KW"/>
</dbReference>
<dbReference type="GO" id="GO:0009423">
    <property type="term" value="P:chorismate biosynthetic process"/>
    <property type="evidence" value="ECO:0007669"/>
    <property type="project" value="UniProtKB-UniRule"/>
</dbReference>
<dbReference type="CDD" id="cd08195">
    <property type="entry name" value="DHQS"/>
    <property type="match status" value="1"/>
</dbReference>
<dbReference type="FunFam" id="3.40.50.1970:FF:000001">
    <property type="entry name" value="3-dehydroquinate synthase"/>
    <property type="match status" value="1"/>
</dbReference>
<dbReference type="Gene3D" id="3.40.50.1970">
    <property type="match status" value="1"/>
</dbReference>
<dbReference type="Gene3D" id="1.20.1090.10">
    <property type="entry name" value="Dehydroquinate synthase-like - alpha domain"/>
    <property type="match status" value="1"/>
</dbReference>
<dbReference type="HAMAP" id="MF_00110">
    <property type="entry name" value="DHQ_synthase"/>
    <property type="match status" value="1"/>
</dbReference>
<dbReference type="InterPro" id="IPR050071">
    <property type="entry name" value="Dehydroquinate_synthase"/>
</dbReference>
<dbReference type="InterPro" id="IPR016037">
    <property type="entry name" value="DHQ_synth_AroB"/>
</dbReference>
<dbReference type="InterPro" id="IPR030963">
    <property type="entry name" value="DHQ_synth_fam"/>
</dbReference>
<dbReference type="InterPro" id="IPR030960">
    <property type="entry name" value="DHQS/DOIS_N"/>
</dbReference>
<dbReference type="InterPro" id="IPR056179">
    <property type="entry name" value="DHQS_C"/>
</dbReference>
<dbReference type="NCBIfam" id="TIGR01357">
    <property type="entry name" value="aroB"/>
    <property type="match status" value="1"/>
</dbReference>
<dbReference type="PANTHER" id="PTHR43622">
    <property type="entry name" value="3-DEHYDROQUINATE SYNTHASE"/>
    <property type="match status" value="1"/>
</dbReference>
<dbReference type="PANTHER" id="PTHR43622:SF7">
    <property type="entry name" value="3-DEHYDROQUINATE SYNTHASE, CHLOROPLASTIC"/>
    <property type="match status" value="1"/>
</dbReference>
<dbReference type="Pfam" id="PF01761">
    <property type="entry name" value="DHQ_synthase"/>
    <property type="match status" value="1"/>
</dbReference>
<dbReference type="Pfam" id="PF24621">
    <property type="entry name" value="DHQS_C"/>
    <property type="match status" value="1"/>
</dbReference>
<dbReference type="PIRSF" id="PIRSF001455">
    <property type="entry name" value="DHQ_synth"/>
    <property type="match status" value="1"/>
</dbReference>
<dbReference type="SUPFAM" id="SSF56796">
    <property type="entry name" value="Dehydroquinate synthase-like"/>
    <property type="match status" value="1"/>
</dbReference>
<sequence>MNAITSAPAERLVRVPLGERAYDILIGPGLIARAGAEIATRLKGRKAAVITDENVAPIYLDALTASLKAAGIQSSSLVLPAGEKTKSFEHLMTVCDAVLTARIERNDAVIALGGGVIGDLSGFAAGIVRRGVRFVQVPTSLLSQVDSSVGGKTGINTHHGKNLVGVFHQPDLVLADTDVLNTLSQREFRAGYAEVAKYGLIDKPDFFAWLEANWQDVFSGGAARIEAIAASCQAKSDVVVADERENGPRALLNLGHTFGHALEAATAYDSRRLVHGEGVAIGMVLAHEFSSRLNLASPDDAKRVDAHLKTVGLPTRMGDIPGELPPAEVLMDAIAQDKKVKSGQLTFILTRGIGQSFVADDVPSSEVLSFLKEKHPQ</sequence>